<sequence>MSFGAAGGSLPMTTREPPERGSFPLDHFGECTHVMKQYLECIKVKRENQEECRLLAKKYLQCRMDTGLFGKDDMKNLGFHGDENATSTSLSSSNDGNNNSNSSSSDNKTGGE</sequence>
<protein>
    <recommendedName>
        <fullName>Cytochrome c oxidase assembly protein cox19, mitochondrial</fullName>
    </recommendedName>
</protein>
<reference key="1">
    <citation type="journal article" date="2002" name="Nature">
        <title>The genome sequence of Schizosaccharomyces pombe.</title>
        <authorList>
            <person name="Wood V."/>
            <person name="Gwilliam R."/>
            <person name="Rajandream M.A."/>
            <person name="Lyne M.H."/>
            <person name="Lyne R."/>
            <person name="Stewart A."/>
            <person name="Sgouros J.G."/>
            <person name="Peat N."/>
            <person name="Hayles J."/>
            <person name="Baker S.G."/>
            <person name="Basham D."/>
            <person name="Bowman S."/>
            <person name="Brooks K."/>
            <person name="Brown D."/>
            <person name="Brown S."/>
            <person name="Chillingworth T."/>
            <person name="Churcher C.M."/>
            <person name="Collins M."/>
            <person name="Connor R."/>
            <person name="Cronin A."/>
            <person name="Davis P."/>
            <person name="Feltwell T."/>
            <person name="Fraser A."/>
            <person name="Gentles S."/>
            <person name="Goble A."/>
            <person name="Hamlin N."/>
            <person name="Harris D.E."/>
            <person name="Hidalgo J."/>
            <person name="Hodgson G."/>
            <person name="Holroyd S."/>
            <person name="Hornsby T."/>
            <person name="Howarth S."/>
            <person name="Huckle E.J."/>
            <person name="Hunt S."/>
            <person name="Jagels K."/>
            <person name="James K.D."/>
            <person name="Jones L."/>
            <person name="Jones M."/>
            <person name="Leather S."/>
            <person name="McDonald S."/>
            <person name="McLean J."/>
            <person name="Mooney P."/>
            <person name="Moule S."/>
            <person name="Mungall K.L."/>
            <person name="Murphy L.D."/>
            <person name="Niblett D."/>
            <person name="Odell C."/>
            <person name="Oliver K."/>
            <person name="O'Neil S."/>
            <person name="Pearson D."/>
            <person name="Quail M.A."/>
            <person name="Rabbinowitsch E."/>
            <person name="Rutherford K.M."/>
            <person name="Rutter S."/>
            <person name="Saunders D."/>
            <person name="Seeger K."/>
            <person name="Sharp S."/>
            <person name="Skelton J."/>
            <person name="Simmonds M.N."/>
            <person name="Squares R."/>
            <person name="Squares S."/>
            <person name="Stevens K."/>
            <person name="Taylor K."/>
            <person name="Taylor R.G."/>
            <person name="Tivey A."/>
            <person name="Walsh S.V."/>
            <person name="Warren T."/>
            <person name="Whitehead S."/>
            <person name="Woodward J.R."/>
            <person name="Volckaert G."/>
            <person name="Aert R."/>
            <person name="Robben J."/>
            <person name="Grymonprez B."/>
            <person name="Weltjens I."/>
            <person name="Vanstreels E."/>
            <person name="Rieger M."/>
            <person name="Schaefer M."/>
            <person name="Mueller-Auer S."/>
            <person name="Gabel C."/>
            <person name="Fuchs M."/>
            <person name="Duesterhoeft A."/>
            <person name="Fritzc C."/>
            <person name="Holzer E."/>
            <person name="Moestl D."/>
            <person name="Hilbert H."/>
            <person name="Borzym K."/>
            <person name="Langer I."/>
            <person name="Beck A."/>
            <person name="Lehrach H."/>
            <person name="Reinhardt R."/>
            <person name="Pohl T.M."/>
            <person name="Eger P."/>
            <person name="Zimmermann W."/>
            <person name="Wedler H."/>
            <person name="Wambutt R."/>
            <person name="Purnelle B."/>
            <person name="Goffeau A."/>
            <person name="Cadieu E."/>
            <person name="Dreano S."/>
            <person name="Gloux S."/>
            <person name="Lelaure V."/>
            <person name="Mottier S."/>
            <person name="Galibert F."/>
            <person name="Aves S.J."/>
            <person name="Xiang Z."/>
            <person name="Hunt C."/>
            <person name="Moore K."/>
            <person name="Hurst S.M."/>
            <person name="Lucas M."/>
            <person name="Rochet M."/>
            <person name="Gaillardin C."/>
            <person name="Tallada V.A."/>
            <person name="Garzon A."/>
            <person name="Thode G."/>
            <person name="Daga R.R."/>
            <person name="Cruzado L."/>
            <person name="Jimenez J."/>
            <person name="Sanchez M."/>
            <person name="del Rey F."/>
            <person name="Benito J."/>
            <person name="Dominguez A."/>
            <person name="Revuelta J.L."/>
            <person name="Moreno S."/>
            <person name="Armstrong J."/>
            <person name="Forsburg S.L."/>
            <person name="Cerutti L."/>
            <person name="Lowe T."/>
            <person name="McCombie W.R."/>
            <person name="Paulsen I."/>
            <person name="Potashkin J."/>
            <person name="Shpakovski G.V."/>
            <person name="Ussery D."/>
            <person name="Barrell B.G."/>
            <person name="Nurse P."/>
        </authorList>
    </citation>
    <scope>NUCLEOTIDE SEQUENCE [LARGE SCALE GENOMIC DNA]</scope>
    <source>
        <strain>972 / ATCC 24843</strain>
    </source>
</reference>
<reference key="2">
    <citation type="journal article" date="2011" name="Science">
        <title>Comparative functional genomics of the fission yeasts.</title>
        <authorList>
            <person name="Rhind N."/>
            <person name="Chen Z."/>
            <person name="Yassour M."/>
            <person name="Thompson D.A."/>
            <person name="Haas B.J."/>
            <person name="Habib N."/>
            <person name="Wapinski I."/>
            <person name="Roy S."/>
            <person name="Lin M.F."/>
            <person name="Heiman D.I."/>
            <person name="Young S.K."/>
            <person name="Furuya K."/>
            <person name="Guo Y."/>
            <person name="Pidoux A."/>
            <person name="Chen H.M."/>
            <person name="Robbertse B."/>
            <person name="Goldberg J.M."/>
            <person name="Aoki K."/>
            <person name="Bayne E.H."/>
            <person name="Berlin A.M."/>
            <person name="Desjardins C.A."/>
            <person name="Dobbs E."/>
            <person name="Dukaj L."/>
            <person name="Fan L."/>
            <person name="FitzGerald M.G."/>
            <person name="French C."/>
            <person name="Gujja S."/>
            <person name="Hansen K."/>
            <person name="Keifenheim D."/>
            <person name="Levin J.Z."/>
            <person name="Mosher R.A."/>
            <person name="Mueller C.A."/>
            <person name="Pfiffner J."/>
            <person name="Priest M."/>
            <person name="Russ C."/>
            <person name="Smialowska A."/>
            <person name="Swoboda P."/>
            <person name="Sykes S.M."/>
            <person name="Vaughn M."/>
            <person name="Vengrova S."/>
            <person name="Yoder R."/>
            <person name="Zeng Q."/>
            <person name="Allshire R."/>
            <person name="Baulcombe D."/>
            <person name="Birren B.W."/>
            <person name="Brown W."/>
            <person name="Ekwall K."/>
            <person name="Kellis M."/>
            <person name="Leatherwood J."/>
            <person name="Levin H."/>
            <person name="Margalit H."/>
            <person name="Martienssen R."/>
            <person name="Nieduszynski C.A."/>
            <person name="Spatafora J.W."/>
            <person name="Friedman N."/>
            <person name="Dalgaard J.Z."/>
            <person name="Baumann P."/>
            <person name="Niki H."/>
            <person name="Regev A."/>
            <person name="Nusbaum C."/>
        </authorList>
    </citation>
    <scope>REVISION OF GENE MODEL</scope>
</reference>
<reference key="3">
    <citation type="journal article" date="2006" name="Nat. Biotechnol.">
        <title>ORFeome cloning and global analysis of protein localization in the fission yeast Schizosaccharomyces pombe.</title>
        <authorList>
            <person name="Matsuyama A."/>
            <person name="Arai R."/>
            <person name="Yashiroda Y."/>
            <person name="Shirai A."/>
            <person name="Kamata A."/>
            <person name="Sekido S."/>
            <person name="Kobayashi Y."/>
            <person name="Hashimoto A."/>
            <person name="Hamamoto M."/>
            <person name="Hiraoka Y."/>
            <person name="Horinouchi S."/>
            <person name="Yoshida M."/>
        </authorList>
    </citation>
    <scope>SUBCELLULAR LOCATION [LARGE SCALE ANALYSIS]</scope>
</reference>
<keyword id="KW-0963">Cytoplasm</keyword>
<keyword id="KW-1015">Disulfide bond</keyword>
<keyword id="KW-0496">Mitochondrion</keyword>
<keyword id="KW-1185">Reference proteome</keyword>
<keyword id="KW-0809">Transit peptide</keyword>
<name>COX19_SCHPO</name>
<dbReference type="EMBL" id="CU329672">
    <property type="protein sequence ID" value="CAA20442.2"/>
    <property type="molecule type" value="Genomic_DNA"/>
</dbReference>
<dbReference type="PIR" id="T41048">
    <property type="entry name" value="T41048"/>
</dbReference>
<dbReference type="RefSeq" id="NP_587875.2">
    <property type="nucleotide sequence ID" value="NM_001022867.2"/>
</dbReference>
<dbReference type="SMR" id="O14056"/>
<dbReference type="BioGRID" id="275514">
    <property type="interactions" value="50"/>
</dbReference>
<dbReference type="FunCoup" id="O14056">
    <property type="interactions" value="214"/>
</dbReference>
<dbReference type="STRING" id="284812.O14056"/>
<dbReference type="PaxDb" id="4896-SPCC1672.04c.1"/>
<dbReference type="EnsemblFungi" id="SPCC1672.04c.1">
    <property type="protein sequence ID" value="SPCC1672.04c.1:pep"/>
    <property type="gene ID" value="SPCC1672.04c"/>
</dbReference>
<dbReference type="GeneID" id="2538939"/>
<dbReference type="KEGG" id="spo:2538939"/>
<dbReference type="PomBase" id="SPCC1672.04c">
    <property type="gene designation" value="cox19"/>
</dbReference>
<dbReference type="VEuPathDB" id="FungiDB:SPCC1672.04c"/>
<dbReference type="eggNOG" id="KOG3477">
    <property type="taxonomic scope" value="Eukaryota"/>
</dbReference>
<dbReference type="HOGENOM" id="CLU_141947_2_0_1"/>
<dbReference type="InParanoid" id="O14056"/>
<dbReference type="OMA" id="FHECDSE"/>
<dbReference type="PRO" id="PR:O14056"/>
<dbReference type="Proteomes" id="UP000002485">
    <property type="component" value="Chromosome III"/>
</dbReference>
<dbReference type="GO" id="GO:0005758">
    <property type="term" value="C:mitochondrial intermembrane space"/>
    <property type="evidence" value="ECO:0000318"/>
    <property type="project" value="GO_Central"/>
</dbReference>
<dbReference type="GO" id="GO:0005507">
    <property type="term" value="F:copper ion binding"/>
    <property type="evidence" value="ECO:0000266"/>
    <property type="project" value="PomBase"/>
</dbReference>
<dbReference type="GO" id="GO:0033617">
    <property type="term" value="P:mitochondrial cytochrome c oxidase assembly"/>
    <property type="evidence" value="ECO:0000318"/>
    <property type="project" value="GO_Central"/>
</dbReference>
<dbReference type="InterPro" id="IPR010625">
    <property type="entry name" value="CHCH"/>
</dbReference>
<dbReference type="InterPro" id="IPR051383">
    <property type="entry name" value="COX19"/>
</dbReference>
<dbReference type="PANTHER" id="PTHR21107">
    <property type="entry name" value="CYTOCHROME C OXIDASE ASSEMBLY PROTEIN COX19"/>
    <property type="match status" value="1"/>
</dbReference>
<dbReference type="PANTHER" id="PTHR21107:SF2">
    <property type="entry name" value="CYTOCHROME C OXIDASE ASSEMBLY PROTEIN COX19"/>
    <property type="match status" value="1"/>
</dbReference>
<dbReference type="Pfam" id="PF06747">
    <property type="entry name" value="CHCH"/>
    <property type="match status" value="1"/>
</dbReference>
<dbReference type="PROSITE" id="PS51808">
    <property type="entry name" value="CHCH"/>
    <property type="match status" value="1"/>
</dbReference>
<comment type="function">
    <text evidence="1">Required for the assembly of mitochondrial cytochrome c oxidase.</text>
</comment>
<comment type="subcellular location">
    <subcellularLocation>
        <location evidence="4">Cytoplasm</location>
    </subcellularLocation>
    <subcellularLocation>
        <location evidence="1">Mitochondrion intermembrane space</location>
    </subcellularLocation>
</comment>
<comment type="similarity">
    <text evidence="5">Belongs to the COX19 family.</text>
</comment>
<feature type="transit peptide" description="Mitochondrion">
    <location>
        <begin position="1"/>
        <end position="16"/>
    </location>
</feature>
<feature type="chain" id="PRO_0000122290" description="Cytochrome c oxidase assembly protein cox19, mitochondrial">
    <location>
        <begin position="17"/>
        <end position="112"/>
    </location>
</feature>
<feature type="domain" description="CHCH" evidence="2">
    <location>
        <begin position="28"/>
        <end position="70"/>
    </location>
</feature>
<feature type="region of interest" description="Disordered" evidence="3">
    <location>
        <begin position="1"/>
        <end position="24"/>
    </location>
</feature>
<feature type="region of interest" description="Disordered" evidence="3">
    <location>
        <begin position="73"/>
        <end position="112"/>
    </location>
</feature>
<feature type="short sequence motif" description="Cx9C motif 1" evidence="2">
    <location>
        <begin position="31"/>
        <end position="41"/>
    </location>
</feature>
<feature type="short sequence motif" description="Cx9C motif 2" evidence="2">
    <location>
        <begin position="52"/>
        <end position="62"/>
    </location>
</feature>
<feature type="compositionally biased region" description="Basic and acidic residues" evidence="3">
    <location>
        <begin position="73"/>
        <end position="83"/>
    </location>
</feature>
<feature type="compositionally biased region" description="Low complexity" evidence="3">
    <location>
        <begin position="84"/>
        <end position="112"/>
    </location>
</feature>
<feature type="disulfide bond" evidence="2">
    <location>
        <begin position="31"/>
        <end position="62"/>
    </location>
</feature>
<feature type="disulfide bond" evidence="2">
    <location>
        <begin position="41"/>
        <end position="52"/>
    </location>
</feature>
<organism>
    <name type="scientific">Schizosaccharomyces pombe (strain 972 / ATCC 24843)</name>
    <name type="common">Fission yeast</name>
    <dbReference type="NCBI Taxonomy" id="284812"/>
    <lineage>
        <taxon>Eukaryota</taxon>
        <taxon>Fungi</taxon>
        <taxon>Dikarya</taxon>
        <taxon>Ascomycota</taxon>
        <taxon>Taphrinomycotina</taxon>
        <taxon>Schizosaccharomycetes</taxon>
        <taxon>Schizosaccharomycetales</taxon>
        <taxon>Schizosaccharomycetaceae</taxon>
        <taxon>Schizosaccharomyces</taxon>
    </lineage>
</organism>
<evidence type="ECO:0000250" key="1"/>
<evidence type="ECO:0000255" key="2">
    <source>
        <dbReference type="PROSITE-ProRule" id="PRU01150"/>
    </source>
</evidence>
<evidence type="ECO:0000256" key="3">
    <source>
        <dbReference type="SAM" id="MobiDB-lite"/>
    </source>
</evidence>
<evidence type="ECO:0000269" key="4">
    <source>
    </source>
</evidence>
<evidence type="ECO:0000305" key="5"/>
<accession>O14056</accession>
<gene>
    <name type="primary">cox19</name>
    <name type="ORF">SPCC1672.04c</name>
</gene>
<proteinExistence type="inferred from homology"/>